<reference key="1">
    <citation type="submission" date="2008-05" db="EMBL/GenBank/DDBJ databases">
        <title>Complete sequence of chromosome 1 of Ralstonia pickettii 12J.</title>
        <authorList>
            <person name="Lucas S."/>
            <person name="Copeland A."/>
            <person name="Lapidus A."/>
            <person name="Glavina del Rio T."/>
            <person name="Dalin E."/>
            <person name="Tice H."/>
            <person name="Bruce D."/>
            <person name="Goodwin L."/>
            <person name="Pitluck S."/>
            <person name="Meincke L."/>
            <person name="Brettin T."/>
            <person name="Detter J.C."/>
            <person name="Han C."/>
            <person name="Kuske C.R."/>
            <person name="Schmutz J."/>
            <person name="Larimer F."/>
            <person name="Land M."/>
            <person name="Hauser L."/>
            <person name="Kyrpides N."/>
            <person name="Mikhailova N."/>
            <person name="Marsh T."/>
            <person name="Richardson P."/>
        </authorList>
    </citation>
    <scope>NUCLEOTIDE SEQUENCE [LARGE SCALE GENOMIC DNA]</scope>
    <source>
        <strain>12J</strain>
    </source>
</reference>
<proteinExistence type="inferred from homology"/>
<dbReference type="EMBL" id="CP001068">
    <property type="protein sequence ID" value="ACD28424.1"/>
    <property type="molecule type" value="Genomic_DNA"/>
</dbReference>
<dbReference type="SMR" id="B2UEM4"/>
<dbReference type="STRING" id="402626.Rpic_3302"/>
<dbReference type="KEGG" id="rpi:Rpic_3302"/>
<dbReference type="eggNOG" id="COG0048">
    <property type="taxonomic scope" value="Bacteria"/>
</dbReference>
<dbReference type="HOGENOM" id="CLU_104295_1_2_4"/>
<dbReference type="GO" id="GO:0015935">
    <property type="term" value="C:small ribosomal subunit"/>
    <property type="evidence" value="ECO:0007669"/>
    <property type="project" value="InterPro"/>
</dbReference>
<dbReference type="GO" id="GO:0019843">
    <property type="term" value="F:rRNA binding"/>
    <property type="evidence" value="ECO:0007669"/>
    <property type="project" value="UniProtKB-UniRule"/>
</dbReference>
<dbReference type="GO" id="GO:0003735">
    <property type="term" value="F:structural constituent of ribosome"/>
    <property type="evidence" value="ECO:0007669"/>
    <property type="project" value="InterPro"/>
</dbReference>
<dbReference type="GO" id="GO:0000049">
    <property type="term" value="F:tRNA binding"/>
    <property type="evidence" value="ECO:0007669"/>
    <property type="project" value="UniProtKB-UniRule"/>
</dbReference>
<dbReference type="GO" id="GO:0006412">
    <property type="term" value="P:translation"/>
    <property type="evidence" value="ECO:0007669"/>
    <property type="project" value="UniProtKB-UniRule"/>
</dbReference>
<dbReference type="CDD" id="cd03368">
    <property type="entry name" value="Ribosomal_S12"/>
    <property type="match status" value="1"/>
</dbReference>
<dbReference type="FunFam" id="2.40.50.140:FF:000001">
    <property type="entry name" value="30S ribosomal protein S12"/>
    <property type="match status" value="1"/>
</dbReference>
<dbReference type="Gene3D" id="2.40.50.140">
    <property type="entry name" value="Nucleic acid-binding proteins"/>
    <property type="match status" value="1"/>
</dbReference>
<dbReference type="HAMAP" id="MF_00403_B">
    <property type="entry name" value="Ribosomal_uS12_B"/>
    <property type="match status" value="1"/>
</dbReference>
<dbReference type="InterPro" id="IPR012340">
    <property type="entry name" value="NA-bd_OB-fold"/>
</dbReference>
<dbReference type="InterPro" id="IPR006032">
    <property type="entry name" value="Ribosomal_uS12"/>
</dbReference>
<dbReference type="InterPro" id="IPR005679">
    <property type="entry name" value="Ribosomal_uS12_bac"/>
</dbReference>
<dbReference type="NCBIfam" id="TIGR00981">
    <property type="entry name" value="rpsL_bact"/>
    <property type="match status" value="1"/>
</dbReference>
<dbReference type="PANTHER" id="PTHR11652">
    <property type="entry name" value="30S RIBOSOMAL PROTEIN S12 FAMILY MEMBER"/>
    <property type="match status" value="1"/>
</dbReference>
<dbReference type="Pfam" id="PF00164">
    <property type="entry name" value="Ribosom_S12_S23"/>
    <property type="match status" value="1"/>
</dbReference>
<dbReference type="PIRSF" id="PIRSF002133">
    <property type="entry name" value="Ribosomal_S12/S23"/>
    <property type="match status" value="1"/>
</dbReference>
<dbReference type="PRINTS" id="PR01034">
    <property type="entry name" value="RIBOSOMALS12"/>
</dbReference>
<dbReference type="SUPFAM" id="SSF50249">
    <property type="entry name" value="Nucleic acid-binding proteins"/>
    <property type="match status" value="1"/>
</dbReference>
<dbReference type="PROSITE" id="PS00055">
    <property type="entry name" value="RIBOSOMAL_S12"/>
    <property type="match status" value="1"/>
</dbReference>
<name>RS12_RALPJ</name>
<sequence>MPTINQLVRKPRVSEKLKSKSPALENCPQRRGVCTRVYTTTPKKPNSALRKVAKVRLTNGFEVISYIGGEGHNLQEHSVVLIRGGRVKDLPGVRYHIVRGSLDLQGVKDRKQARSKYGAKRPKAA</sequence>
<gene>
    <name evidence="2" type="primary">rpsL</name>
    <name type="ordered locus">Rpic_3302</name>
</gene>
<comment type="function">
    <text evidence="2">With S4 and S5 plays an important role in translational accuracy.</text>
</comment>
<comment type="function">
    <text evidence="2">Interacts with and stabilizes bases of the 16S rRNA that are involved in tRNA selection in the A site and with the mRNA backbone. Located at the interface of the 30S and 50S subunits, it traverses the body of the 30S subunit contacting proteins on the other side and probably holding the rRNA structure together. The combined cluster of proteins S8, S12 and S17 appears to hold together the shoulder and platform of the 30S subunit.</text>
</comment>
<comment type="subunit">
    <text evidence="2">Part of the 30S ribosomal subunit. Contacts proteins S8 and S17. May interact with IF1 in the 30S initiation complex.</text>
</comment>
<comment type="similarity">
    <text evidence="2">Belongs to the universal ribosomal protein uS12 family.</text>
</comment>
<accession>B2UEM4</accession>
<feature type="chain" id="PRO_1000194213" description="Small ribosomal subunit protein uS12">
    <location>
        <begin position="1"/>
        <end position="125"/>
    </location>
</feature>
<feature type="modified residue" description="3-methylthioaspartic acid" evidence="1">
    <location>
        <position position="89"/>
    </location>
</feature>
<organism>
    <name type="scientific">Ralstonia pickettii (strain 12J)</name>
    <dbReference type="NCBI Taxonomy" id="402626"/>
    <lineage>
        <taxon>Bacteria</taxon>
        <taxon>Pseudomonadati</taxon>
        <taxon>Pseudomonadota</taxon>
        <taxon>Betaproteobacteria</taxon>
        <taxon>Burkholderiales</taxon>
        <taxon>Burkholderiaceae</taxon>
        <taxon>Ralstonia</taxon>
    </lineage>
</organism>
<protein>
    <recommendedName>
        <fullName evidence="2">Small ribosomal subunit protein uS12</fullName>
    </recommendedName>
    <alternativeName>
        <fullName evidence="3">30S ribosomal protein S12</fullName>
    </alternativeName>
</protein>
<keyword id="KW-0488">Methylation</keyword>
<keyword id="KW-0687">Ribonucleoprotein</keyword>
<keyword id="KW-0689">Ribosomal protein</keyword>
<keyword id="KW-0694">RNA-binding</keyword>
<keyword id="KW-0699">rRNA-binding</keyword>
<keyword id="KW-0820">tRNA-binding</keyword>
<evidence type="ECO:0000250" key="1"/>
<evidence type="ECO:0000255" key="2">
    <source>
        <dbReference type="HAMAP-Rule" id="MF_00403"/>
    </source>
</evidence>
<evidence type="ECO:0000305" key="3"/>